<sequence>MQDNSSHSRESASAGDDPLGIDKLTVDYDYLLYKIRDYVQSIQLDTTELCKKQNEVMVNGIIENTIDKNIAKFKELLEKCDTLENHYEMLNQLAIITDTFKERIAEAVNNYNSLKKGASKSK</sequence>
<feature type="chain" id="PRO_0000410649" description="Biogenesis of lysosome-related organelles complex 1 subunit CNL1">
    <location>
        <begin position="1"/>
        <end position="122"/>
    </location>
</feature>
<feature type="region of interest" description="Disordered" evidence="3">
    <location>
        <begin position="1"/>
        <end position="21"/>
    </location>
</feature>
<feature type="coiled-coil region" evidence="2">
    <location>
        <begin position="63"/>
        <end position="95"/>
    </location>
</feature>
<feature type="compositionally biased region" description="Basic and acidic residues" evidence="3">
    <location>
        <begin position="1"/>
        <end position="10"/>
    </location>
</feature>
<accession>C8Z5R9</accession>
<comment type="function">
    <text evidence="1">Component of the biogenesis of lysosome-related organelles complex-1 (BLOC-1), a complex that is involved in endosomal cargo sorting.</text>
</comment>
<comment type="subunit">
    <text evidence="1">Component of the biogenesis of lysosome-related organelles complex-1 (BLOC-1) composed of at least BLI1, BLS1, CNL1, KXD1, SNN1 and VAB2.</text>
</comment>
<comment type="subcellular location">
    <subcellularLocation>
        <location evidence="1">Cytoplasm</location>
    </subcellularLocation>
    <text evidence="1">Punctate pattern.</text>
</comment>
<comment type="similarity">
    <text evidence="4">Belongs to the BLOC1S4 family.</text>
</comment>
<gene>
    <name type="primary">CLN1</name>
    <name type="ORF">EC1118_1D0_6502g</name>
</gene>
<proteinExistence type="inferred from homology"/>
<keyword id="KW-0175">Coiled coil</keyword>
<keyword id="KW-0963">Cytoplasm</keyword>
<keyword id="KW-0813">Transport</keyword>
<evidence type="ECO:0000250" key="1"/>
<evidence type="ECO:0000255" key="2"/>
<evidence type="ECO:0000256" key="3">
    <source>
        <dbReference type="SAM" id="MobiDB-lite"/>
    </source>
</evidence>
<evidence type="ECO:0000305" key="4"/>
<dbReference type="EMBL" id="FN393063">
    <property type="protein sequence ID" value="CAY78858.1"/>
    <property type="molecule type" value="Genomic_DNA"/>
</dbReference>
<dbReference type="SMR" id="C8Z5R9"/>
<dbReference type="HOGENOM" id="CLU_141728_1_0_1"/>
<dbReference type="OrthoDB" id="35127at4893"/>
<dbReference type="Proteomes" id="UP000000286">
    <property type="component" value="Chromosome IV, Scaffold EC1118_1D0"/>
</dbReference>
<dbReference type="GO" id="GO:0031083">
    <property type="term" value="C:BLOC-1 complex"/>
    <property type="evidence" value="ECO:0007669"/>
    <property type="project" value="InterPro"/>
</dbReference>
<dbReference type="GO" id="GO:0005737">
    <property type="term" value="C:cytoplasm"/>
    <property type="evidence" value="ECO:0007669"/>
    <property type="project" value="UniProtKB-SubCell"/>
</dbReference>
<dbReference type="GO" id="GO:0007032">
    <property type="term" value="P:endosome organization"/>
    <property type="evidence" value="ECO:0007669"/>
    <property type="project" value="TreeGrafter"/>
</dbReference>
<dbReference type="CDD" id="cd24144">
    <property type="entry name" value="BLOC1_CNL1"/>
    <property type="match status" value="1"/>
</dbReference>
<dbReference type="InterPro" id="IPR034455">
    <property type="entry name" value="CNL1"/>
</dbReference>
<dbReference type="PANTHER" id="PTHR39145">
    <property type="entry name" value="BIOGENESIS OF LYSOSOME-RELATED ORGANELLES COMPLEX 1 SUBUNIT CNL1"/>
    <property type="match status" value="1"/>
</dbReference>
<dbReference type="PANTHER" id="PTHR39145:SF1">
    <property type="entry name" value="BIOGENESIS OF LYSOSOME-RELATED ORGANELLES COMPLEX 1 SUBUNIT CNL1"/>
    <property type="match status" value="1"/>
</dbReference>
<protein>
    <recommendedName>
        <fullName>Biogenesis of lysosome-related organelles complex 1 subunit CNL1</fullName>
        <shortName>BLOC-1 subunit CNL1</shortName>
    </recommendedName>
    <alternativeName>
        <fullName>CNO-like protein 1</fullName>
    </alternativeName>
</protein>
<organism>
    <name type="scientific">Saccharomyces cerevisiae (strain Lalvin EC1118 / Prise de mousse)</name>
    <name type="common">Baker's yeast</name>
    <dbReference type="NCBI Taxonomy" id="643680"/>
    <lineage>
        <taxon>Eukaryota</taxon>
        <taxon>Fungi</taxon>
        <taxon>Dikarya</taxon>
        <taxon>Ascomycota</taxon>
        <taxon>Saccharomycotina</taxon>
        <taxon>Saccharomycetes</taxon>
        <taxon>Saccharomycetales</taxon>
        <taxon>Saccharomycetaceae</taxon>
        <taxon>Saccharomyces</taxon>
    </lineage>
</organism>
<name>BL1S4_YEAS8</name>
<reference key="1">
    <citation type="journal article" date="2009" name="Proc. Natl. Acad. Sci. U.S.A.">
        <title>Eukaryote-to-eukaryote gene transfer events revealed by the genome sequence of the wine yeast Saccharomyces cerevisiae EC1118.</title>
        <authorList>
            <person name="Novo M."/>
            <person name="Bigey F."/>
            <person name="Beyne E."/>
            <person name="Galeote V."/>
            <person name="Gavory F."/>
            <person name="Mallet S."/>
            <person name="Cambon B."/>
            <person name="Legras J.-L."/>
            <person name="Wincker P."/>
            <person name="Casaregola S."/>
            <person name="Dequin S."/>
        </authorList>
    </citation>
    <scope>NUCLEOTIDE SEQUENCE [LARGE SCALE GENOMIC DNA]</scope>
    <source>
        <strain>Lalvin EC1118 / Prise de mousse</strain>
    </source>
</reference>